<evidence type="ECO:0000256" key="1">
    <source>
        <dbReference type="SAM" id="MobiDB-lite"/>
    </source>
</evidence>
<evidence type="ECO:0000305" key="2"/>
<feature type="transit peptide" description="Chloroplast">
    <location>
        <begin position="1"/>
        <end position="74"/>
    </location>
</feature>
<feature type="chain" id="PRO_0000002302" description="Phospho-2-dehydro-3-deoxyheptonate aldolase 1, chloroplastic">
    <location>
        <begin position="75"/>
        <end position="538"/>
    </location>
</feature>
<feature type="region of interest" description="Disordered" evidence="1">
    <location>
        <begin position="55"/>
        <end position="82"/>
    </location>
</feature>
<feature type="compositionally biased region" description="Low complexity" evidence="1">
    <location>
        <begin position="68"/>
        <end position="82"/>
    </location>
</feature>
<feature type="modified residue" description="Blocked amino end (Thr)">
    <location>
        <position position="75"/>
    </location>
</feature>
<dbReference type="EC" id="2.5.1.54"/>
<dbReference type="EMBL" id="J05191">
    <property type="protein sequence ID" value="AAA33810.1"/>
    <property type="status" value="ALT_SEQ"/>
    <property type="molecule type" value="mRNA"/>
</dbReference>
<dbReference type="PIR" id="A35016">
    <property type="entry name" value="A35016"/>
</dbReference>
<dbReference type="SMR" id="P21357"/>
<dbReference type="FunCoup" id="P21357">
    <property type="interactions" value="1067"/>
</dbReference>
<dbReference type="STRING" id="4113.P21357"/>
<dbReference type="PaxDb" id="4113-PGSC0003DMT400079161"/>
<dbReference type="eggNOG" id="ENOG502QPP7">
    <property type="taxonomic scope" value="Eukaryota"/>
</dbReference>
<dbReference type="InParanoid" id="P21357"/>
<dbReference type="UniPathway" id="UPA00053">
    <property type="reaction ID" value="UER00084"/>
</dbReference>
<dbReference type="Proteomes" id="UP000011115">
    <property type="component" value="Unassembled WGS sequence"/>
</dbReference>
<dbReference type="ExpressionAtlas" id="P21357">
    <property type="expression patterns" value="baseline"/>
</dbReference>
<dbReference type="GO" id="GO:0009507">
    <property type="term" value="C:chloroplast"/>
    <property type="evidence" value="ECO:0007669"/>
    <property type="project" value="UniProtKB-SubCell"/>
</dbReference>
<dbReference type="GO" id="GO:0003849">
    <property type="term" value="F:3-deoxy-7-phosphoheptulonate synthase activity"/>
    <property type="evidence" value="ECO:0007669"/>
    <property type="project" value="UniProtKB-EC"/>
</dbReference>
<dbReference type="GO" id="GO:0008652">
    <property type="term" value="P:amino acid biosynthetic process"/>
    <property type="evidence" value="ECO:0007669"/>
    <property type="project" value="UniProtKB-KW"/>
</dbReference>
<dbReference type="GO" id="GO:0009073">
    <property type="term" value="P:aromatic amino acid family biosynthetic process"/>
    <property type="evidence" value="ECO:0007669"/>
    <property type="project" value="UniProtKB-KW"/>
</dbReference>
<dbReference type="GO" id="GO:0009423">
    <property type="term" value="P:chorismate biosynthetic process"/>
    <property type="evidence" value="ECO:0007669"/>
    <property type="project" value="UniProtKB-UniPathway"/>
</dbReference>
<dbReference type="FunFam" id="3.20.20.70:FF:000128">
    <property type="entry name" value="Phospho-2-dehydro-3-deoxyheptonate aldolase"/>
    <property type="match status" value="1"/>
</dbReference>
<dbReference type="Gene3D" id="3.20.20.70">
    <property type="entry name" value="Aldolase class I"/>
    <property type="match status" value="1"/>
</dbReference>
<dbReference type="InterPro" id="IPR013785">
    <property type="entry name" value="Aldolase_TIM"/>
</dbReference>
<dbReference type="InterPro" id="IPR002480">
    <property type="entry name" value="DAHP_synth_2"/>
</dbReference>
<dbReference type="NCBIfam" id="TIGR01358">
    <property type="entry name" value="DAHP_synth_II"/>
    <property type="match status" value="1"/>
</dbReference>
<dbReference type="PANTHER" id="PTHR21337:SF0">
    <property type="entry name" value="PHOSPHO-2-DEHYDRO-3-DEOXYHEPTONATE ALDOLASE"/>
    <property type="match status" value="1"/>
</dbReference>
<dbReference type="PANTHER" id="PTHR21337">
    <property type="entry name" value="PHOSPHO-2-DEHYDRO-3-DEOXYHEPTONATE ALDOLASE 1, 2"/>
    <property type="match status" value="1"/>
</dbReference>
<dbReference type="Pfam" id="PF01474">
    <property type="entry name" value="DAHP_synth_2"/>
    <property type="match status" value="1"/>
</dbReference>
<dbReference type="SUPFAM" id="SSF51569">
    <property type="entry name" value="Aldolase"/>
    <property type="match status" value="1"/>
</dbReference>
<accession>P21357</accession>
<reference key="1">
    <citation type="journal article" date="1990" name="J. Biol. Chem.">
        <title>A cDNA encoding 3-deoxy-D-arabino-heptulosonate 7-phosphate synthase from Solanum tuberosum L.</title>
        <authorList>
            <person name="Dyer W.E."/>
            <person name="Weaver L.M."/>
            <person name="Zhao J."/>
            <person name="Kuhn D.N."/>
            <person name="Weller S.C."/>
            <person name="Herrmann K.M."/>
        </authorList>
    </citation>
    <scope>NUCLEOTIDE SEQUENCE [MRNA]</scope>
    <scope>PARTIAL PROTEIN SEQUENCE</scope>
    <source>
        <strain>cv. Superior</strain>
    </source>
</reference>
<proteinExistence type="evidence at protein level"/>
<comment type="catalytic activity">
    <reaction>
        <text>D-erythrose 4-phosphate + phosphoenolpyruvate + H2O = 7-phospho-2-dehydro-3-deoxy-D-arabino-heptonate + phosphate</text>
        <dbReference type="Rhea" id="RHEA:14717"/>
        <dbReference type="ChEBI" id="CHEBI:15377"/>
        <dbReference type="ChEBI" id="CHEBI:16897"/>
        <dbReference type="ChEBI" id="CHEBI:43474"/>
        <dbReference type="ChEBI" id="CHEBI:58394"/>
        <dbReference type="ChEBI" id="CHEBI:58702"/>
        <dbReference type="EC" id="2.5.1.54"/>
    </reaction>
</comment>
<comment type="activity regulation">
    <text>Activation by tryptophan (a hysteretic factor).</text>
</comment>
<comment type="pathway">
    <text>Metabolic intermediate biosynthesis; chorismate biosynthesis; chorismate from D-erythrose 4-phosphate and phosphoenolpyruvate: step 1/7.</text>
</comment>
<comment type="subcellular location">
    <subcellularLocation>
        <location>Plastid</location>
        <location>Chloroplast</location>
    </subcellularLocation>
</comment>
<comment type="induction">
    <text>By the herbicide glyphosate and wounding.</text>
</comment>
<comment type="similarity">
    <text evidence="2">Belongs to the class-II DAHP synthase family.</text>
</comment>
<gene>
    <name type="primary">SHKA</name>
    <name type="synonym">ARO1</name>
</gene>
<sequence>MALSSTSTTNSLLPNRSLVQNQPLLPSPLKNAFFSNNSTKTVRFVQPISAVHSSDSNKIPIVSDKPSKSSPPAATATTAPAPAVTKTEWAVDSWKSKKALQLPEYPNQEELRSVLKTIDEFPPIVFAGEARSLEERLGEAAMGRAFLLQGGDCAESFKEFNANNIRDTFRILLQMGAVLMFGGQMPVIKVGRMAGQFAKPRSDSFEEKDGVKLPSYRGDNVNGDAFDVKSRTPDPQRLIRAYCQSAATLNLLRAFATGGYAAMQRINQWNLDFTEHSEQGDRYRELASRVDEALGFMTAAGLTMDHPIMKTTEFWTSHECLLLPYEQSLTRRDSTSGLYYDCSAHFLWVGERTRQLDGAHVEFLRGIANPLGIKVSDKMDPSALVKLIEILNPQNKAGRITIITRMGAENMRVKLPHLIRAVRRAGQIVTWVSDPMHGNTIKAPCGLKTRPFDSIRAEVRAFFDVHDQEGSHPGGVHLEMTGQNVTECIGGSRTVTFDDLSSRYHTHCDPRLNASQSLELSFIIAERLRKRRLGSQSV</sequence>
<organism>
    <name type="scientific">Solanum tuberosum</name>
    <name type="common">Potato</name>
    <dbReference type="NCBI Taxonomy" id="4113"/>
    <lineage>
        <taxon>Eukaryota</taxon>
        <taxon>Viridiplantae</taxon>
        <taxon>Streptophyta</taxon>
        <taxon>Embryophyta</taxon>
        <taxon>Tracheophyta</taxon>
        <taxon>Spermatophyta</taxon>
        <taxon>Magnoliopsida</taxon>
        <taxon>eudicotyledons</taxon>
        <taxon>Gunneridae</taxon>
        <taxon>Pentapetalae</taxon>
        <taxon>asterids</taxon>
        <taxon>lamiids</taxon>
        <taxon>Solanales</taxon>
        <taxon>Solanaceae</taxon>
        <taxon>Solanoideae</taxon>
        <taxon>Solaneae</taxon>
        <taxon>Solanum</taxon>
    </lineage>
</organism>
<name>AROF_SOLTU</name>
<protein>
    <recommendedName>
        <fullName>Phospho-2-dehydro-3-deoxyheptonate aldolase 1, chloroplastic</fullName>
        <ecNumber>2.5.1.54</ecNumber>
    </recommendedName>
    <alternativeName>
        <fullName>3-deoxy-D-arabino-heptulosonate 7-phosphate synthase 1</fullName>
    </alternativeName>
    <alternativeName>
        <fullName>DAHP synthase 1</fullName>
    </alternativeName>
    <alternativeName>
        <fullName>Phospho-2-keto-3-deoxyheptonate aldolase 1</fullName>
    </alternativeName>
</protein>
<keyword id="KW-0028">Amino-acid biosynthesis</keyword>
<keyword id="KW-0057">Aromatic amino acid biosynthesis</keyword>
<keyword id="KW-0150">Chloroplast</keyword>
<keyword id="KW-0903">Direct protein sequencing</keyword>
<keyword id="KW-0934">Plastid</keyword>
<keyword id="KW-1185">Reference proteome</keyword>
<keyword id="KW-0808">Transferase</keyword>
<keyword id="KW-0809">Transit peptide</keyword>